<proteinExistence type="inferred from homology"/>
<comment type="function">
    <text evidence="1">This protein binds to the 23S rRNA, and is important in its secondary structure. It is located near the subunit interface in the base of the L7/L12 stalk, and near the tRNA binding site of the peptidyltransferase center.</text>
</comment>
<comment type="subunit">
    <text evidence="1">Part of the 50S ribosomal subunit.</text>
</comment>
<comment type="similarity">
    <text evidence="1">Belongs to the universal ribosomal protein uL6 family.</text>
</comment>
<evidence type="ECO:0000255" key="1">
    <source>
        <dbReference type="HAMAP-Rule" id="MF_01365"/>
    </source>
</evidence>
<evidence type="ECO:0000305" key="2"/>
<dbReference type="EMBL" id="CP000868">
    <property type="protein sequence ID" value="ABX13959.1"/>
    <property type="molecule type" value="Genomic_DNA"/>
</dbReference>
<dbReference type="EMBL" id="AP009385">
    <property type="protein sequence ID" value="BAG44875.1"/>
    <property type="molecule type" value="Genomic_DNA"/>
</dbReference>
<dbReference type="RefSeq" id="WP_006400646.1">
    <property type="nucleotide sequence ID" value="NC_010804.1"/>
</dbReference>
<dbReference type="SMR" id="A9ADK8"/>
<dbReference type="STRING" id="395019.BMULJ_02990"/>
<dbReference type="GeneID" id="93126534"/>
<dbReference type="KEGG" id="bmj:BMULJ_02990"/>
<dbReference type="KEGG" id="bmu:Bmul_0264"/>
<dbReference type="eggNOG" id="COG0097">
    <property type="taxonomic scope" value="Bacteria"/>
</dbReference>
<dbReference type="HOGENOM" id="CLU_065464_1_2_4"/>
<dbReference type="Proteomes" id="UP000008815">
    <property type="component" value="Chromosome 1"/>
</dbReference>
<dbReference type="GO" id="GO:0022625">
    <property type="term" value="C:cytosolic large ribosomal subunit"/>
    <property type="evidence" value="ECO:0007669"/>
    <property type="project" value="TreeGrafter"/>
</dbReference>
<dbReference type="GO" id="GO:0019843">
    <property type="term" value="F:rRNA binding"/>
    <property type="evidence" value="ECO:0007669"/>
    <property type="project" value="UniProtKB-UniRule"/>
</dbReference>
<dbReference type="GO" id="GO:0003735">
    <property type="term" value="F:structural constituent of ribosome"/>
    <property type="evidence" value="ECO:0007669"/>
    <property type="project" value="InterPro"/>
</dbReference>
<dbReference type="GO" id="GO:0002181">
    <property type="term" value="P:cytoplasmic translation"/>
    <property type="evidence" value="ECO:0007669"/>
    <property type="project" value="TreeGrafter"/>
</dbReference>
<dbReference type="FunFam" id="3.90.930.12:FF:000001">
    <property type="entry name" value="50S ribosomal protein L6"/>
    <property type="match status" value="1"/>
</dbReference>
<dbReference type="Gene3D" id="3.90.930.12">
    <property type="entry name" value="Ribosomal protein L6, alpha-beta domain"/>
    <property type="match status" value="2"/>
</dbReference>
<dbReference type="HAMAP" id="MF_01365_B">
    <property type="entry name" value="Ribosomal_uL6_B"/>
    <property type="match status" value="1"/>
</dbReference>
<dbReference type="InterPro" id="IPR000702">
    <property type="entry name" value="Ribosomal_uL6-like"/>
</dbReference>
<dbReference type="InterPro" id="IPR036789">
    <property type="entry name" value="Ribosomal_uL6-like_a/b-dom_sf"/>
</dbReference>
<dbReference type="InterPro" id="IPR020040">
    <property type="entry name" value="Ribosomal_uL6_a/b-dom"/>
</dbReference>
<dbReference type="InterPro" id="IPR019906">
    <property type="entry name" value="Ribosomal_uL6_bac-type"/>
</dbReference>
<dbReference type="InterPro" id="IPR002358">
    <property type="entry name" value="Ribosomal_uL6_CS"/>
</dbReference>
<dbReference type="NCBIfam" id="TIGR03654">
    <property type="entry name" value="L6_bact"/>
    <property type="match status" value="1"/>
</dbReference>
<dbReference type="PANTHER" id="PTHR11655">
    <property type="entry name" value="60S/50S RIBOSOMAL PROTEIN L6/L9"/>
    <property type="match status" value="1"/>
</dbReference>
<dbReference type="PANTHER" id="PTHR11655:SF14">
    <property type="entry name" value="LARGE RIBOSOMAL SUBUNIT PROTEIN UL6M"/>
    <property type="match status" value="1"/>
</dbReference>
<dbReference type="Pfam" id="PF00347">
    <property type="entry name" value="Ribosomal_L6"/>
    <property type="match status" value="2"/>
</dbReference>
<dbReference type="PIRSF" id="PIRSF002162">
    <property type="entry name" value="Ribosomal_L6"/>
    <property type="match status" value="1"/>
</dbReference>
<dbReference type="PRINTS" id="PR00059">
    <property type="entry name" value="RIBOSOMALL6"/>
</dbReference>
<dbReference type="SUPFAM" id="SSF56053">
    <property type="entry name" value="Ribosomal protein L6"/>
    <property type="match status" value="2"/>
</dbReference>
<dbReference type="PROSITE" id="PS00525">
    <property type="entry name" value="RIBOSOMAL_L6_1"/>
    <property type="match status" value="1"/>
</dbReference>
<protein>
    <recommendedName>
        <fullName evidence="1">Large ribosomal subunit protein uL6</fullName>
    </recommendedName>
    <alternativeName>
        <fullName evidence="2">50S ribosomal protein L6</fullName>
    </alternativeName>
</protein>
<feature type="chain" id="PRO_1000143954" description="Large ribosomal subunit protein uL6">
    <location>
        <begin position="1"/>
        <end position="176"/>
    </location>
</feature>
<sequence>MSRVGKSPIALQGAEVKLADGVITVKGPLGTITQAVNPLVKVANNDGTLNLAPADESREANALSGTMRAIIANAVHGVTKGFERKLTLVGVGYRAQAQGDKLNLSLGFSHPVVHQMPEGVKAETPTQTEIVIKGIDKQKVGQVAAEVRGYRPPEPYKGKGVRYADEVVILKETKKK</sequence>
<reference key="1">
    <citation type="submission" date="2007-10" db="EMBL/GenBank/DDBJ databases">
        <title>Complete sequence of chromosome 1 of Burkholderia multivorans ATCC 17616.</title>
        <authorList>
            <person name="Copeland A."/>
            <person name="Lucas S."/>
            <person name="Lapidus A."/>
            <person name="Barry K."/>
            <person name="Glavina del Rio T."/>
            <person name="Dalin E."/>
            <person name="Tice H."/>
            <person name="Pitluck S."/>
            <person name="Chain P."/>
            <person name="Malfatti S."/>
            <person name="Shin M."/>
            <person name="Vergez L."/>
            <person name="Schmutz J."/>
            <person name="Larimer F."/>
            <person name="Land M."/>
            <person name="Hauser L."/>
            <person name="Kyrpides N."/>
            <person name="Kim E."/>
            <person name="Tiedje J."/>
            <person name="Richardson P."/>
        </authorList>
    </citation>
    <scope>NUCLEOTIDE SEQUENCE [LARGE SCALE GENOMIC DNA]</scope>
    <source>
        <strain>ATCC 17616 / 249</strain>
    </source>
</reference>
<reference key="2">
    <citation type="submission" date="2007-04" db="EMBL/GenBank/DDBJ databases">
        <title>Complete genome sequence of Burkholderia multivorans ATCC 17616.</title>
        <authorList>
            <person name="Ohtsubo Y."/>
            <person name="Yamashita A."/>
            <person name="Kurokawa K."/>
            <person name="Takami H."/>
            <person name="Yuhara S."/>
            <person name="Nishiyama E."/>
            <person name="Endo R."/>
            <person name="Miyazaki R."/>
            <person name="Ono A."/>
            <person name="Yano K."/>
            <person name="Ito M."/>
            <person name="Sota M."/>
            <person name="Yuji N."/>
            <person name="Hattori M."/>
            <person name="Tsuda M."/>
        </authorList>
    </citation>
    <scope>NUCLEOTIDE SEQUENCE [LARGE SCALE GENOMIC DNA]</scope>
    <source>
        <strain>ATCC 17616 / 249</strain>
    </source>
</reference>
<gene>
    <name evidence="1" type="primary">rplF</name>
    <name type="ordered locus">Bmul_0264</name>
    <name type="ordered locus">BMULJ_02990</name>
</gene>
<accession>A9ADK8</accession>
<organism>
    <name type="scientific">Burkholderia multivorans (strain ATCC 17616 / 249)</name>
    <dbReference type="NCBI Taxonomy" id="395019"/>
    <lineage>
        <taxon>Bacteria</taxon>
        <taxon>Pseudomonadati</taxon>
        <taxon>Pseudomonadota</taxon>
        <taxon>Betaproteobacteria</taxon>
        <taxon>Burkholderiales</taxon>
        <taxon>Burkholderiaceae</taxon>
        <taxon>Burkholderia</taxon>
        <taxon>Burkholderia cepacia complex</taxon>
    </lineage>
</organism>
<keyword id="KW-1185">Reference proteome</keyword>
<keyword id="KW-0687">Ribonucleoprotein</keyword>
<keyword id="KW-0689">Ribosomal protein</keyword>
<keyword id="KW-0694">RNA-binding</keyword>
<keyword id="KW-0699">rRNA-binding</keyword>
<name>RL6_BURM1</name>